<organism>
    <name type="scientific">Nostoc sp. (strain PCC 7120 / SAG 25.82 / UTEX 2576)</name>
    <dbReference type="NCBI Taxonomy" id="103690"/>
    <lineage>
        <taxon>Bacteria</taxon>
        <taxon>Bacillati</taxon>
        <taxon>Cyanobacteriota</taxon>
        <taxon>Cyanophyceae</taxon>
        <taxon>Nostocales</taxon>
        <taxon>Nostocaceae</taxon>
        <taxon>Nostoc</taxon>
    </lineage>
</organism>
<gene>
    <name evidence="1" type="primary">pstB2</name>
    <name type="ordered locus">all0908</name>
</gene>
<name>PSTB2_NOSS1</name>
<sequence length="260" mass="28967">MNQQLVPAIKVKDLSFYYNTSKAIEGISMDIYRNKVTAIIGPSGCGKSTFIKTLNRISELEGPVKVEGVVDFFGQNIYDPRININRLRRQIGMVFQRPNPFPMSIYENVAYGVRISAKLPQADLDEIVESALKGAALWQEVKDKLNKSALGLSGGQQQRLCIARALAIKPKVLLMDEPCSALDPIATMKVEELIHSLRSELTIAIVTHNMQQATRVSDFTAFFSTDESRIGQMVEFGVTTQIFSNPLDSRTRDYVSGRFG</sequence>
<protein>
    <recommendedName>
        <fullName evidence="1">Phosphate import ATP-binding protein PstB 2</fullName>
        <ecNumber evidence="1">7.3.2.1</ecNumber>
    </recommendedName>
    <alternativeName>
        <fullName evidence="1">ABC phosphate transporter 2</fullName>
    </alternativeName>
    <alternativeName>
        <fullName evidence="1">Phosphate-transporting ATPase 2</fullName>
    </alternativeName>
</protein>
<accession>Q8YYE2</accession>
<comment type="function">
    <text evidence="1">Part of the ABC transporter complex PstSACB involved in phosphate import. Responsible for energy coupling to the transport system.</text>
</comment>
<comment type="catalytic activity">
    <reaction evidence="1">
        <text>phosphate(out) + ATP + H2O = ADP + 2 phosphate(in) + H(+)</text>
        <dbReference type="Rhea" id="RHEA:24440"/>
        <dbReference type="ChEBI" id="CHEBI:15377"/>
        <dbReference type="ChEBI" id="CHEBI:15378"/>
        <dbReference type="ChEBI" id="CHEBI:30616"/>
        <dbReference type="ChEBI" id="CHEBI:43474"/>
        <dbReference type="ChEBI" id="CHEBI:456216"/>
        <dbReference type="EC" id="7.3.2.1"/>
    </reaction>
</comment>
<comment type="subunit">
    <text evidence="1">The complex is composed of two ATP-binding proteins (PstB), two transmembrane proteins (PstC and PstA) and a solute-binding protein (PstS).</text>
</comment>
<comment type="subcellular location">
    <subcellularLocation>
        <location evidence="1">Cell inner membrane</location>
        <topology evidence="1">Peripheral membrane protein</topology>
    </subcellularLocation>
</comment>
<comment type="similarity">
    <text evidence="1">Belongs to the ABC transporter superfamily. Phosphate importer (TC 3.A.1.7) family.</text>
</comment>
<evidence type="ECO:0000255" key="1">
    <source>
        <dbReference type="HAMAP-Rule" id="MF_01702"/>
    </source>
</evidence>
<reference key="1">
    <citation type="journal article" date="2001" name="DNA Res.">
        <title>Complete genomic sequence of the filamentous nitrogen-fixing cyanobacterium Anabaena sp. strain PCC 7120.</title>
        <authorList>
            <person name="Kaneko T."/>
            <person name="Nakamura Y."/>
            <person name="Wolk C.P."/>
            <person name="Kuritz T."/>
            <person name="Sasamoto S."/>
            <person name="Watanabe A."/>
            <person name="Iriguchi M."/>
            <person name="Ishikawa A."/>
            <person name="Kawashima K."/>
            <person name="Kimura T."/>
            <person name="Kishida Y."/>
            <person name="Kohara M."/>
            <person name="Matsumoto M."/>
            <person name="Matsuno A."/>
            <person name="Muraki A."/>
            <person name="Nakazaki N."/>
            <person name="Shimpo S."/>
            <person name="Sugimoto M."/>
            <person name="Takazawa M."/>
            <person name="Yamada M."/>
            <person name="Yasuda M."/>
            <person name="Tabata S."/>
        </authorList>
    </citation>
    <scope>NUCLEOTIDE SEQUENCE [LARGE SCALE GENOMIC DNA]</scope>
    <source>
        <strain>PCC 7120 / SAG 25.82 / UTEX 2576</strain>
    </source>
</reference>
<keyword id="KW-0067">ATP-binding</keyword>
<keyword id="KW-0997">Cell inner membrane</keyword>
<keyword id="KW-1003">Cell membrane</keyword>
<keyword id="KW-0472">Membrane</keyword>
<keyword id="KW-0547">Nucleotide-binding</keyword>
<keyword id="KW-0592">Phosphate transport</keyword>
<keyword id="KW-1185">Reference proteome</keyword>
<keyword id="KW-1278">Translocase</keyword>
<keyword id="KW-0813">Transport</keyword>
<dbReference type="EC" id="7.3.2.1" evidence="1"/>
<dbReference type="EMBL" id="BA000019">
    <property type="protein sequence ID" value="BAB72865.1"/>
    <property type="molecule type" value="Genomic_DNA"/>
</dbReference>
<dbReference type="PIR" id="AI1919">
    <property type="entry name" value="AI1919"/>
</dbReference>
<dbReference type="SMR" id="Q8YYE2"/>
<dbReference type="STRING" id="103690.gene:10492921"/>
<dbReference type="KEGG" id="ana:all0908"/>
<dbReference type="eggNOG" id="COG1117">
    <property type="taxonomic scope" value="Bacteria"/>
</dbReference>
<dbReference type="OrthoDB" id="9802185at2"/>
<dbReference type="Proteomes" id="UP000002483">
    <property type="component" value="Chromosome"/>
</dbReference>
<dbReference type="GO" id="GO:0005886">
    <property type="term" value="C:plasma membrane"/>
    <property type="evidence" value="ECO:0007669"/>
    <property type="project" value="UniProtKB-SubCell"/>
</dbReference>
<dbReference type="GO" id="GO:0005524">
    <property type="term" value="F:ATP binding"/>
    <property type="evidence" value="ECO:0007669"/>
    <property type="project" value="UniProtKB-KW"/>
</dbReference>
<dbReference type="GO" id="GO:0016887">
    <property type="term" value="F:ATP hydrolysis activity"/>
    <property type="evidence" value="ECO:0007669"/>
    <property type="project" value="InterPro"/>
</dbReference>
<dbReference type="GO" id="GO:0015415">
    <property type="term" value="F:ATPase-coupled phosphate ion transmembrane transporter activity"/>
    <property type="evidence" value="ECO:0007669"/>
    <property type="project" value="UniProtKB-EC"/>
</dbReference>
<dbReference type="GO" id="GO:0035435">
    <property type="term" value="P:phosphate ion transmembrane transport"/>
    <property type="evidence" value="ECO:0007669"/>
    <property type="project" value="InterPro"/>
</dbReference>
<dbReference type="CDD" id="cd03260">
    <property type="entry name" value="ABC_PstB_phosphate_transporter"/>
    <property type="match status" value="1"/>
</dbReference>
<dbReference type="Gene3D" id="3.40.50.300">
    <property type="entry name" value="P-loop containing nucleotide triphosphate hydrolases"/>
    <property type="match status" value="1"/>
</dbReference>
<dbReference type="InterPro" id="IPR003593">
    <property type="entry name" value="AAA+_ATPase"/>
</dbReference>
<dbReference type="InterPro" id="IPR003439">
    <property type="entry name" value="ABC_transporter-like_ATP-bd"/>
</dbReference>
<dbReference type="InterPro" id="IPR017871">
    <property type="entry name" value="ABC_transporter-like_CS"/>
</dbReference>
<dbReference type="InterPro" id="IPR027417">
    <property type="entry name" value="P-loop_NTPase"/>
</dbReference>
<dbReference type="InterPro" id="IPR005670">
    <property type="entry name" value="PstB-like"/>
</dbReference>
<dbReference type="NCBIfam" id="TIGR00972">
    <property type="entry name" value="3a0107s01c2"/>
    <property type="match status" value="1"/>
</dbReference>
<dbReference type="NCBIfam" id="NF010851">
    <property type="entry name" value="PRK14258.1"/>
    <property type="match status" value="1"/>
</dbReference>
<dbReference type="PANTHER" id="PTHR43423">
    <property type="entry name" value="ABC TRANSPORTER I FAMILY MEMBER 17"/>
    <property type="match status" value="1"/>
</dbReference>
<dbReference type="PANTHER" id="PTHR43423:SF9">
    <property type="entry name" value="PHOSPHATE IMPORT ATP-BINDING PROTEIN PSTB 3"/>
    <property type="match status" value="1"/>
</dbReference>
<dbReference type="Pfam" id="PF00005">
    <property type="entry name" value="ABC_tran"/>
    <property type="match status" value="1"/>
</dbReference>
<dbReference type="SMART" id="SM00382">
    <property type="entry name" value="AAA"/>
    <property type="match status" value="1"/>
</dbReference>
<dbReference type="SUPFAM" id="SSF52540">
    <property type="entry name" value="P-loop containing nucleoside triphosphate hydrolases"/>
    <property type="match status" value="1"/>
</dbReference>
<dbReference type="PROSITE" id="PS00211">
    <property type="entry name" value="ABC_TRANSPORTER_1"/>
    <property type="match status" value="1"/>
</dbReference>
<dbReference type="PROSITE" id="PS50893">
    <property type="entry name" value="ABC_TRANSPORTER_2"/>
    <property type="match status" value="1"/>
</dbReference>
<dbReference type="PROSITE" id="PS51238">
    <property type="entry name" value="PSTB"/>
    <property type="match status" value="1"/>
</dbReference>
<feature type="chain" id="PRO_0000092768" description="Phosphate import ATP-binding protein PstB 2">
    <location>
        <begin position="1"/>
        <end position="260"/>
    </location>
</feature>
<feature type="domain" description="ABC transporter" evidence="1">
    <location>
        <begin position="9"/>
        <end position="255"/>
    </location>
</feature>
<feature type="binding site" evidence="1">
    <location>
        <begin position="41"/>
        <end position="48"/>
    </location>
    <ligand>
        <name>ATP</name>
        <dbReference type="ChEBI" id="CHEBI:30616"/>
    </ligand>
</feature>
<proteinExistence type="inferred from homology"/>